<dbReference type="EC" id="7.1.2.2" evidence="1"/>
<dbReference type="EMBL" id="CP000423">
    <property type="protein sequence ID" value="ABJ69952.1"/>
    <property type="molecule type" value="Genomic_DNA"/>
</dbReference>
<dbReference type="RefSeq" id="WP_003564962.1">
    <property type="nucleotide sequence ID" value="NC_008526.1"/>
</dbReference>
<dbReference type="RefSeq" id="YP_806394.1">
    <property type="nucleotide sequence ID" value="NC_008526.1"/>
</dbReference>
<dbReference type="SMR" id="Q03A20"/>
<dbReference type="STRING" id="321967.LSEI_1164"/>
<dbReference type="PaxDb" id="321967-LSEI_1164"/>
<dbReference type="GeneID" id="57089858"/>
<dbReference type="KEGG" id="lca:LSEI_1164"/>
<dbReference type="PATRIC" id="fig|321967.11.peg.1137"/>
<dbReference type="HOGENOM" id="CLU_010091_2_1_9"/>
<dbReference type="Proteomes" id="UP000001651">
    <property type="component" value="Chromosome"/>
</dbReference>
<dbReference type="GO" id="GO:0005886">
    <property type="term" value="C:plasma membrane"/>
    <property type="evidence" value="ECO:0007669"/>
    <property type="project" value="UniProtKB-SubCell"/>
</dbReference>
<dbReference type="GO" id="GO:0045259">
    <property type="term" value="C:proton-transporting ATP synthase complex"/>
    <property type="evidence" value="ECO:0007669"/>
    <property type="project" value="UniProtKB-KW"/>
</dbReference>
<dbReference type="GO" id="GO:0043531">
    <property type="term" value="F:ADP binding"/>
    <property type="evidence" value="ECO:0007669"/>
    <property type="project" value="TreeGrafter"/>
</dbReference>
<dbReference type="GO" id="GO:0005524">
    <property type="term" value="F:ATP binding"/>
    <property type="evidence" value="ECO:0007669"/>
    <property type="project" value="UniProtKB-UniRule"/>
</dbReference>
<dbReference type="GO" id="GO:0046933">
    <property type="term" value="F:proton-transporting ATP synthase activity, rotational mechanism"/>
    <property type="evidence" value="ECO:0007669"/>
    <property type="project" value="UniProtKB-UniRule"/>
</dbReference>
<dbReference type="CDD" id="cd18113">
    <property type="entry name" value="ATP-synt_F1_alpha_C"/>
    <property type="match status" value="1"/>
</dbReference>
<dbReference type="CDD" id="cd18116">
    <property type="entry name" value="ATP-synt_F1_alpha_N"/>
    <property type="match status" value="1"/>
</dbReference>
<dbReference type="CDD" id="cd01132">
    <property type="entry name" value="F1-ATPase_alpha_CD"/>
    <property type="match status" value="1"/>
</dbReference>
<dbReference type="FunFam" id="1.20.150.20:FF:000001">
    <property type="entry name" value="ATP synthase subunit alpha"/>
    <property type="match status" value="1"/>
</dbReference>
<dbReference type="FunFam" id="2.40.30.20:FF:000001">
    <property type="entry name" value="ATP synthase subunit alpha"/>
    <property type="match status" value="1"/>
</dbReference>
<dbReference type="FunFam" id="3.40.50.300:FF:000002">
    <property type="entry name" value="ATP synthase subunit alpha"/>
    <property type="match status" value="1"/>
</dbReference>
<dbReference type="Gene3D" id="2.40.30.20">
    <property type="match status" value="1"/>
</dbReference>
<dbReference type="Gene3D" id="1.20.150.20">
    <property type="entry name" value="ATP synthase alpha/beta chain, C-terminal domain"/>
    <property type="match status" value="1"/>
</dbReference>
<dbReference type="Gene3D" id="3.40.50.300">
    <property type="entry name" value="P-loop containing nucleotide triphosphate hydrolases"/>
    <property type="match status" value="1"/>
</dbReference>
<dbReference type="HAMAP" id="MF_01346">
    <property type="entry name" value="ATP_synth_alpha_bact"/>
    <property type="match status" value="1"/>
</dbReference>
<dbReference type="InterPro" id="IPR023366">
    <property type="entry name" value="ATP_synth_asu-like_sf"/>
</dbReference>
<dbReference type="InterPro" id="IPR000793">
    <property type="entry name" value="ATP_synth_asu_C"/>
</dbReference>
<dbReference type="InterPro" id="IPR038376">
    <property type="entry name" value="ATP_synth_asu_C_sf"/>
</dbReference>
<dbReference type="InterPro" id="IPR033732">
    <property type="entry name" value="ATP_synth_F1_a_nt-bd_dom"/>
</dbReference>
<dbReference type="InterPro" id="IPR005294">
    <property type="entry name" value="ATP_synth_F1_asu"/>
</dbReference>
<dbReference type="InterPro" id="IPR020003">
    <property type="entry name" value="ATPase_a/bsu_AS"/>
</dbReference>
<dbReference type="InterPro" id="IPR004100">
    <property type="entry name" value="ATPase_F1/V1/A1_a/bsu_N"/>
</dbReference>
<dbReference type="InterPro" id="IPR036121">
    <property type="entry name" value="ATPase_F1/V1/A1_a/bsu_N_sf"/>
</dbReference>
<dbReference type="InterPro" id="IPR000194">
    <property type="entry name" value="ATPase_F1/V1/A1_a/bsu_nucl-bd"/>
</dbReference>
<dbReference type="InterPro" id="IPR027417">
    <property type="entry name" value="P-loop_NTPase"/>
</dbReference>
<dbReference type="NCBIfam" id="TIGR00962">
    <property type="entry name" value="atpA"/>
    <property type="match status" value="1"/>
</dbReference>
<dbReference type="NCBIfam" id="NF009884">
    <property type="entry name" value="PRK13343.1"/>
    <property type="match status" value="1"/>
</dbReference>
<dbReference type="PANTHER" id="PTHR48082">
    <property type="entry name" value="ATP SYNTHASE SUBUNIT ALPHA, MITOCHONDRIAL"/>
    <property type="match status" value="1"/>
</dbReference>
<dbReference type="PANTHER" id="PTHR48082:SF2">
    <property type="entry name" value="ATP SYNTHASE SUBUNIT ALPHA, MITOCHONDRIAL"/>
    <property type="match status" value="1"/>
</dbReference>
<dbReference type="Pfam" id="PF00006">
    <property type="entry name" value="ATP-synt_ab"/>
    <property type="match status" value="1"/>
</dbReference>
<dbReference type="Pfam" id="PF00306">
    <property type="entry name" value="ATP-synt_ab_C"/>
    <property type="match status" value="1"/>
</dbReference>
<dbReference type="Pfam" id="PF02874">
    <property type="entry name" value="ATP-synt_ab_N"/>
    <property type="match status" value="1"/>
</dbReference>
<dbReference type="PIRSF" id="PIRSF039088">
    <property type="entry name" value="F_ATPase_subunit_alpha"/>
    <property type="match status" value="1"/>
</dbReference>
<dbReference type="SUPFAM" id="SSF47917">
    <property type="entry name" value="C-terminal domain of alpha and beta subunits of F1 ATP synthase"/>
    <property type="match status" value="1"/>
</dbReference>
<dbReference type="SUPFAM" id="SSF50615">
    <property type="entry name" value="N-terminal domain of alpha and beta subunits of F1 ATP synthase"/>
    <property type="match status" value="1"/>
</dbReference>
<dbReference type="SUPFAM" id="SSF52540">
    <property type="entry name" value="P-loop containing nucleoside triphosphate hydrolases"/>
    <property type="match status" value="1"/>
</dbReference>
<dbReference type="PROSITE" id="PS00152">
    <property type="entry name" value="ATPASE_ALPHA_BETA"/>
    <property type="match status" value="1"/>
</dbReference>
<name>ATPA_LACP3</name>
<proteinExistence type="inferred from homology"/>
<reference key="1">
    <citation type="journal article" date="2006" name="Proc. Natl. Acad. Sci. U.S.A.">
        <title>Comparative genomics of the lactic acid bacteria.</title>
        <authorList>
            <person name="Makarova K.S."/>
            <person name="Slesarev A."/>
            <person name="Wolf Y.I."/>
            <person name="Sorokin A."/>
            <person name="Mirkin B."/>
            <person name="Koonin E.V."/>
            <person name="Pavlov A."/>
            <person name="Pavlova N."/>
            <person name="Karamychev V."/>
            <person name="Polouchine N."/>
            <person name="Shakhova V."/>
            <person name="Grigoriev I."/>
            <person name="Lou Y."/>
            <person name="Rohksar D."/>
            <person name="Lucas S."/>
            <person name="Huang K."/>
            <person name="Goodstein D.M."/>
            <person name="Hawkins T."/>
            <person name="Plengvidhya V."/>
            <person name="Welker D."/>
            <person name="Hughes J."/>
            <person name="Goh Y."/>
            <person name="Benson A."/>
            <person name="Baldwin K."/>
            <person name="Lee J.-H."/>
            <person name="Diaz-Muniz I."/>
            <person name="Dosti B."/>
            <person name="Smeianov V."/>
            <person name="Wechter W."/>
            <person name="Barabote R."/>
            <person name="Lorca G."/>
            <person name="Altermann E."/>
            <person name="Barrangou R."/>
            <person name="Ganesan B."/>
            <person name="Xie Y."/>
            <person name="Rawsthorne H."/>
            <person name="Tamir D."/>
            <person name="Parker C."/>
            <person name="Breidt F."/>
            <person name="Broadbent J.R."/>
            <person name="Hutkins R."/>
            <person name="O'Sullivan D."/>
            <person name="Steele J."/>
            <person name="Unlu G."/>
            <person name="Saier M.H. Jr."/>
            <person name="Klaenhammer T."/>
            <person name="Richardson P."/>
            <person name="Kozyavkin S."/>
            <person name="Weimer B.C."/>
            <person name="Mills D.A."/>
        </authorList>
    </citation>
    <scope>NUCLEOTIDE SEQUENCE [LARGE SCALE GENOMIC DNA]</scope>
    <source>
        <strain>ATCC 334 / BCRC 17002 / CCUG 31169 / CIP 107868 / KCTC 3260 / NRRL B-441</strain>
    </source>
</reference>
<keyword id="KW-0066">ATP synthesis</keyword>
<keyword id="KW-0067">ATP-binding</keyword>
<keyword id="KW-1003">Cell membrane</keyword>
<keyword id="KW-0139">CF(1)</keyword>
<keyword id="KW-0375">Hydrogen ion transport</keyword>
<keyword id="KW-0406">Ion transport</keyword>
<keyword id="KW-0472">Membrane</keyword>
<keyword id="KW-0547">Nucleotide-binding</keyword>
<keyword id="KW-1185">Reference proteome</keyword>
<keyword id="KW-1278">Translocase</keyword>
<keyword id="KW-0813">Transport</keyword>
<evidence type="ECO:0000255" key="1">
    <source>
        <dbReference type="HAMAP-Rule" id="MF_01346"/>
    </source>
</evidence>
<organism>
    <name type="scientific">Lacticaseibacillus paracasei (strain ATCC 334 / BCRC 17002 / CCUG 31169 / CIP 107868 / KCTC 3260 / NRRL B-441)</name>
    <name type="common">Lactobacillus paracasei</name>
    <dbReference type="NCBI Taxonomy" id="321967"/>
    <lineage>
        <taxon>Bacteria</taxon>
        <taxon>Bacillati</taxon>
        <taxon>Bacillota</taxon>
        <taxon>Bacilli</taxon>
        <taxon>Lactobacillales</taxon>
        <taxon>Lactobacillaceae</taxon>
        <taxon>Lacticaseibacillus</taxon>
    </lineage>
</organism>
<accession>Q03A20</accession>
<protein>
    <recommendedName>
        <fullName evidence="1">ATP synthase subunit alpha</fullName>
        <ecNumber evidence="1">7.1.2.2</ecNumber>
    </recommendedName>
    <alternativeName>
        <fullName evidence="1">ATP synthase F1 sector subunit alpha</fullName>
    </alternativeName>
    <alternativeName>
        <fullName evidence="1">F-ATPase subunit alpha</fullName>
    </alternativeName>
</protein>
<gene>
    <name evidence="1" type="primary">atpA</name>
    <name type="ordered locus">LSEI_1164</name>
</gene>
<sequence>MSIKTEEISSLIKKQLEGYQDDLAAEEVGTVTYIGDGIARATGLENAMANELLQFSNGSYGMALNLETNDVGIIILGDFDEIREGDQVKRTGRIMEVPVGDAMIGRVVNSLGQPVDGLGAIKTDKTRPIEFKAPGVMQRKSVSEPLQTGLKAIDALVPIGRGQRELIIGDRKTGKTSIAIDTILNQKDQNMICVYVAIGQKDSTVRAQVETLKKYGAMDYTIVLTAGPSEPAPMLYIAPYAGAAMGEEFMYNGKHVLIVYDDLSKQATSYRELSLLLRRPPGREAYPGDIFYTHSRLLERAAKLSDKLGGGSMTALPVIETQAGDISAYIPTNVISITDGQIFLQSDLFYAGTRPAIDAGASVSRVGGDAQVKAMKKVAGTLRLDLASFRELEAFTQFGSDLDAATQAKLNRGRRTVEVLKQPVHKPLPVEKQVIILYALTHGFLDPIPIEDITRFQDELFDFFDSNAADLLKQIRDTGNLPDTDKLDAQIKAFAGGFQTSKQLAAAKD</sequence>
<feature type="chain" id="PRO_0000302659" description="ATP synthase subunit alpha">
    <location>
        <begin position="1"/>
        <end position="509"/>
    </location>
</feature>
<feature type="binding site" evidence="1">
    <location>
        <begin position="169"/>
        <end position="176"/>
    </location>
    <ligand>
        <name>ATP</name>
        <dbReference type="ChEBI" id="CHEBI:30616"/>
    </ligand>
</feature>
<feature type="site" description="Required for activity" evidence="1">
    <location>
        <position position="362"/>
    </location>
</feature>
<comment type="function">
    <text evidence="1">Produces ATP from ADP in the presence of a proton gradient across the membrane. The alpha chain is a regulatory subunit.</text>
</comment>
<comment type="catalytic activity">
    <reaction evidence="1">
        <text>ATP + H2O + 4 H(+)(in) = ADP + phosphate + 5 H(+)(out)</text>
        <dbReference type="Rhea" id="RHEA:57720"/>
        <dbReference type="ChEBI" id="CHEBI:15377"/>
        <dbReference type="ChEBI" id="CHEBI:15378"/>
        <dbReference type="ChEBI" id="CHEBI:30616"/>
        <dbReference type="ChEBI" id="CHEBI:43474"/>
        <dbReference type="ChEBI" id="CHEBI:456216"/>
        <dbReference type="EC" id="7.1.2.2"/>
    </reaction>
</comment>
<comment type="subunit">
    <text evidence="1">F-type ATPases have 2 components, CF(1) - the catalytic core - and CF(0) - the membrane proton channel. CF(1) has five subunits: alpha(3), beta(3), gamma(1), delta(1), epsilon(1). CF(0) has three main subunits: a(1), b(2) and c(9-12). The alpha and beta chains form an alternating ring which encloses part of the gamma chain. CF(1) is attached to CF(0) by a central stalk formed by the gamma and epsilon chains, while a peripheral stalk is formed by the delta and b chains.</text>
</comment>
<comment type="subcellular location">
    <subcellularLocation>
        <location evidence="1">Cell membrane</location>
        <topology evidence="1">Peripheral membrane protein</topology>
    </subcellularLocation>
</comment>
<comment type="similarity">
    <text evidence="1">Belongs to the ATPase alpha/beta chains family.</text>
</comment>